<accession>B7K5I8</accession>
<sequence>MVSIRPDEISSIIRQQIESYDQTVTVSNVGTVLQVGDGTARIYGLEQAMAGELLEFEDGTVGIALNLEEDNVGAVLMGTGLDIQEGSTVKATGKIAQVPVGEALIGRVVDALGRPIDGKGDINTTETRLIESMAPGIVARKSVCEPMQTGITAIDAMIPVGRGQRELIIGDRKTGKTAIAIDTIINQKSEDVICVYVAIGQKASTVAQVIGTLEEKGAMAYTIVVAANANDPATLQYLAPYTGASMAEYFMYKGKATLVIYDDLSKQAQAYRQLSLLLKRPPGREAYPGDVFYIHSRLLERAAKLSDALGGGSMTALPVIETQAGDVSAYIPTNVISITDGQIFLSSDLFNSGFRPAINAGISVSRVGSAAQTKAMKQVAGKLKLELAQFAELEAFSQFASDLDAATQSQLARGQRLREVLKQPENSPLAVWEQVAIAYAGLNGYLDEIPVPKVSEFAAGLRDYIKTSKAKFADIVGSEKKLTDEAETLLKEAIAEYKQAFGV</sequence>
<feature type="chain" id="PRO_1000143364" description="ATP synthase subunit alpha">
    <location>
        <begin position="1"/>
        <end position="503"/>
    </location>
</feature>
<feature type="binding site" evidence="1">
    <location>
        <begin position="170"/>
        <end position="177"/>
    </location>
    <ligand>
        <name>ATP</name>
        <dbReference type="ChEBI" id="CHEBI:30616"/>
    </ligand>
</feature>
<feature type="site" description="Required for activity" evidence="1">
    <location>
        <position position="363"/>
    </location>
</feature>
<name>ATPA_RIPO1</name>
<evidence type="ECO:0000255" key="1">
    <source>
        <dbReference type="HAMAP-Rule" id="MF_01346"/>
    </source>
</evidence>
<comment type="function">
    <text evidence="1">Produces ATP from ADP in the presence of a proton gradient across the membrane. The alpha chain is a regulatory subunit.</text>
</comment>
<comment type="catalytic activity">
    <reaction evidence="1">
        <text>ATP + H2O + 4 H(+)(in) = ADP + phosphate + 5 H(+)(out)</text>
        <dbReference type="Rhea" id="RHEA:57720"/>
        <dbReference type="ChEBI" id="CHEBI:15377"/>
        <dbReference type="ChEBI" id="CHEBI:15378"/>
        <dbReference type="ChEBI" id="CHEBI:30616"/>
        <dbReference type="ChEBI" id="CHEBI:43474"/>
        <dbReference type="ChEBI" id="CHEBI:456216"/>
        <dbReference type="EC" id="7.1.2.2"/>
    </reaction>
</comment>
<comment type="subunit">
    <text evidence="1">F-type ATPases have 2 components, CF(1) - the catalytic core - and CF(0) - the membrane proton channel. CF(1) has five subunits: alpha(3), beta(3), gamma(1), delta(1), epsilon(1). CF(0) has four main subunits: a, b, b' and c.</text>
</comment>
<comment type="subcellular location">
    <subcellularLocation>
        <location evidence="1">Cellular thylakoid membrane</location>
        <topology evidence="1">Peripheral membrane protein</topology>
    </subcellularLocation>
</comment>
<comment type="similarity">
    <text evidence="1">Belongs to the ATPase alpha/beta chains family.</text>
</comment>
<protein>
    <recommendedName>
        <fullName evidence="1">ATP synthase subunit alpha</fullName>
        <ecNumber evidence="1">7.1.2.2</ecNumber>
    </recommendedName>
    <alternativeName>
        <fullName evidence="1">ATP synthase F1 sector subunit alpha</fullName>
    </alternativeName>
    <alternativeName>
        <fullName evidence="1">F-ATPase subunit alpha</fullName>
    </alternativeName>
</protein>
<proteinExistence type="inferred from homology"/>
<dbReference type="EC" id="7.1.2.2" evidence="1"/>
<dbReference type="EMBL" id="CP001287">
    <property type="protein sequence ID" value="ACK66721.1"/>
    <property type="molecule type" value="Genomic_DNA"/>
</dbReference>
<dbReference type="RefSeq" id="WP_012595988.1">
    <property type="nucleotide sequence ID" value="NC_011726.1"/>
</dbReference>
<dbReference type="SMR" id="B7K5I8"/>
<dbReference type="STRING" id="41431.PCC8801_2720"/>
<dbReference type="KEGG" id="cyp:PCC8801_2720"/>
<dbReference type="eggNOG" id="COG0056">
    <property type="taxonomic scope" value="Bacteria"/>
</dbReference>
<dbReference type="HOGENOM" id="CLU_010091_2_1_3"/>
<dbReference type="OrthoDB" id="9803053at2"/>
<dbReference type="Proteomes" id="UP000008204">
    <property type="component" value="Chromosome"/>
</dbReference>
<dbReference type="GO" id="GO:0031676">
    <property type="term" value="C:plasma membrane-derived thylakoid membrane"/>
    <property type="evidence" value="ECO:0007669"/>
    <property type="project" value="UniProtKB-SubCell"/>
</dbReference>
<dbReference type="GO" id="GO:0045259">
    <property type="term" value="C:proton-transporting ATP synthase complex"/>
    <property type="evidence" value="ECO:0007669"/>
    <property type="project" value="UniProtKB-KW"/>
</dbReference>
<dbReference type="GO" id="GO:0043531">
    <property type="term" value="F:ADP binding"/>
    <property type="evidence" value="ECO:0007669"/>
    <property type="project" value="TreeGrafter"/>
</dbReference>
<dbReference type="GO" id="GO:0005524">
    <property type="term" value="F:ATP binding"/>
    <property type="evidence" value="ECO:0007669"/>
    <property type="project" value="UniProtKB-UniRule"/>
</dbReference>
<dbReference type="GO" id="GO:0046933">
    <property type="term" value="F:proton-transporting ATP synthase activity, rotational mechanism"/>
    <property type="evidence" value="ECO:0007669"/>
    <property type="project" value="UniProtKB-UniRule"/>
</dbReference>
<dbReference type="CDD" id="cd18113">
    <property type="entry name" value="ATP-synt_F1_alpha_C"/>
    <property type="match status" value="1"/>
</dbReference>
<dbReference type="CDD" id="cd18116">
    <property type="entry name" value="ATP-synt_F1_alpha_N"/>
    <property type="match status" value="1"/>
</dbReference>
<dbReference type="CDD" id="cd01132">
    <property type="entry name" value="F1-ATPase_alpha_CD"/>
    <property type="match status" value="1"/>
</dbReference>
<dbReference type="FunFam" id="1.20.150.20:FF:000001">
    <property type="entry name" value="ATP synthase subunit alpha"/>
    <property type="match status" value="1"/>
</dbReference>
<dbReference type="FunFam" id="2.40.30.20:FF:000001">
    <property type="entry name" value="ATP synthase subunit alpha"/>
    <property type="match status" value="1"/>
</dbReference>
<dbReference type="FunFam" id="3.40.50.300:FF:000002">
    <property type="entry name" value="ATP synthase subunit alpha"/>
    <property type="match status" value="1"/>
</dbReference>
<dbReference type="Gene3D" id="2.40.30.20">
    <property type="match status" value="1"/>
</dbReference>
<dbReference type="Gene3D" id="1.20.150.20">
    <property type="entry name" value="ATP synthase alpha/beta chain, C-terminal domain"/>
    <property type="match status" value="1"/>
</dbReference>
<dbReference type="Gene3D" id="3.40.50.300">
    <property type="entry name" value="P-loop containing nucleotide triphosphate hydrolases"/>
    <property type="match status" value="1"/>
</dbReference>
<dbReference type="HAMAP" id="MF_01346">
    <property type="entry name" value="ATP_synth_alpha_bact"/>
    <property type="match status" value="1"/>
</dbReference>
<dbReference type="InterPro" id="IPR023366">
    <property type="entry name" value="ATP_synth_asu-like_sf"/>
</dbReference>
<dbReference type="InterPro" id="IPR000793">
    <property type="entry name" value="ATP_synth_asu_C"/>
</dbReference>
<dbReference type="InterPro" id="IPR038376">
    <property type="entry name" value="ATP_synth_asu_C_sf"/>
</dbReference>
<dbReference type="InterPro" id="IPR033732">
    <property type="entry name" value="ATP_synth_F1_a_nt-bd_dom"/>
</dbReference>
<dbReference type="InterPro" id="IPR005294">
    <property type="entry name" value="ATP_synth_F1_asu"/>
</dbReference>
<dbReference type="InterPro" id="IPR020003">
    <property type="entry name" value="ATPase_a/bsu_AS"/>
</dbReference>
<dbReference type="InterPro" id="IPR004100">
    <property type="entry name" value="ATPase_F1/V1/A1_a/bsu_N"/>
</dbReference>
<dbReference type="InterPro" id="IPR036121">
    <property type="entry name" value="ATPase_F1/V1/A1_a/bsu_N_sf"/>
</dbReference>
<dbReference type="InterPro" id="IPR000194">
    <property type="entry name" value="ATPase_F1/V1/A1_a/bsu_nucl-bd"/>
</dbReference>
<dbReference type="InterPro" id="IPR027417">
    <property type="entry name" value="P-loop_NTPase"/>
</dbReference>
<dbReference type="NCBIfam" id="TIGR00962">
    <property type="entry name" value="atpA"/>
    <property type="match status" value="1"/>
</dbReference>
<dbReference type="NCBIfam" id="NF009884">
    <property type="entry name" value="PRK13343.1"/>
    <property type="match status" value="1"/>
</dbReference>
<dbReference type="PANTHER" id="PTHR48082">
    <property type="entry name" value="ATP SYNTHASE SUBUNIT ALPHA, MITOCHONDRIAL"/>
    <property type="match status" value="1"/>
</dbReference>
<dbReference type="PANTHER" id="PTHR48082:SF2">
    <property type="entry name" value="ATP SYNTHASE SUBUNIT ALPHA, MITOCHONDRIAL"/>
    <property type="match status" value="1"/>
</dbReference>
<dbReference type="Pfam" id="PF00006">
    <property type="entry name" value="ATP-synt_ab"/>
    <property type="match status" value="1"/>
</dbReference>
<dbReference type="Pfam" id="PF00306">
    <property type="entry name" value="ATP-synt_ab_C"/>
    <property type="match status" value="1"/>
</dbReference>
<dbReference type="Pfam" id="PF02874">
    <property type="entry name" value="ATP-synt_ab_N"/>
    <property type="match status" value="1"/>
</dbReference>
<dbReference type="PIRSF" id="PIRSF039088">
    <property type="entry name" value="F_ATPase_subunit_alpha"/>
    <property type="match status" value="1"/>
</dbReference>
<dbReference type="SUPFAM" id="SSF47917">
    <property type="entry name" value="C-terminal domain of alpha and beta subunits of F1 ATP synthase"/>
    <property type="match status" value="1"/>
</dbReference>
<dbReference type="SUPFAM" id="SSF50615">
    <property type="entry name" value="N-terminal domain of alpha and beta subunits of F1 ATP synthase"/>
    <property type="match status" value="1"/>
</dbReference>
<dbReference type="SUPFAM" id="SSF52540">
    <property type="entry name" value="P-loop containing nucleoside triphosphate hydrolases"/>
    <property type="match status" value="1"/>
</dbReference>
<dbReference type="PROSITE" id="PS00152">
    <property type="entry name" value="ATPASE_ALPHA_BETA"/>
    <property type="match status" value="1"/>
</dbReference>
<organism>
    <name type="scientific">Rippkaea orientalis (strain PCC 8801 / RF-1)</name>
    <name type="common">Cyanothece sp. (strain PCC 8801)</name>
    <dbReference type="NCBI Taxonomy" id="41431"/>
    <lineage>
        <taxon>Bacteria</taxon>
        <taxon>Bacillati</taxon>
        <taxon>Cyanobacteriota</taxon>
        <taxon>Cyanophyceae</taxon>
        <taxon>Oscillatoriophycideae</taxon>
        <taxon>Chroococcales</taxon>
        <taxon>Aphanothecaceae</taxon>
        <taxon>Rippkaea</taxon>
        <taxon>Rippkaea orientalis</taxon>
    </lineage>
</organism>
<keyword id="KW-0066">ATP synthesis</keyword>
<keyword id="KW-0067">ATP-binding</keyword>
<keyword id="KW-0139">CF(1)</keyword>
<keyword id="KW-0375">Hydrogen ion transport</keyword>
<keyword id="KW-0406">Ion transport</keyword>
<keyword id="KW-0472">Membrane</keyword>
<keyword id="KW-0547">Nucleotide-binding</keyword>
<keyword id="KW-1185">Reference proteome</keyword>
<keyword id="KW-0793">Thylakoid</keyword>
<keyword id="KW-1278">Translocase</keyword>
<keyword id="KW-0813">Transport</keyword>
<reference key="1">
    <citation type="journal article" date="2011" name="MBio">
        <title>Novel metabolic attributes of the genus Cyanothece, comprising a group of unicellular nitrogen-fixing Cyanobacteria.</title>
        <authorList>
            <person name="Bandyopadhyay A."/>
            <person name="Elvitigala T."/>
            <person name="Welsh E."/>
            <person name="Stockel J."/>
            <person name="Liberton M."/>
            <person name="Min H."/>
            <person name="Sherman L.A."/>
            <person name="Pakrasi H.B."/>
        </authorList>
    </citation>
    <scope>NUCLEOTIDE SEQUENCE [LARGE SCALE GENOMIC DNA]</scope>
    <source>
        <strain>PCC 8801 / RF-1</strain>
    </source>
</reference>
<gene>
    <name evidence="1" type="primary">atpA</name>
    <name type="ordered locus">PCC8801_2720</name>
</gene>